<name>OS9_CANAL</name>
<protein>
    <recommendedName>
        <fullName>Protein OS-9 homolog</fullName>
    </recommendedName>
</protein>
<gene>
    <name type="primary">YOS9</name>
    <name type="ordered locus">CAALFM_CR10020CA</name>
    <name type="ORF">CaO19.7578</name>
</gene>
<comment type="function">
    <text evidence="1">Lectin involved in the quality control of the secretory pathway. As a member of the endoplasmic reticulum-associated degradation lumenal (ERAD-L) surveillance system, targets misfolded endoplasmic reticulum lumenal glycoproteins for degradation (By similarity).</text>
</comment>
<comment type="subunit">
    <text evidence="1">Interacts with missfolded ER lumenal proteins.</text>
</comment>
<comment type="subcellular location">
    <subcellularLocation>
        <location evidence="1">Endoplasmic reticulum membrane</location>
        <topology evidence="1">Peripheral membrane protein</topology>
        <orientation evidence="1">Lumenal side</orientation>
    </subcellularLocation>
</comment>
<comment type="similarity">
    <text evidence="5">Belongs to the OS-9 family.</text>
</comment>
<evidence type="ECO:0000250" key="1"/>
<evidence type="ECO:0000250" key="2">
    <source>
        <dbReference type="UniProtKB" id="Q13438"/>
    </source>
</evidence>
<evidence type="ECO:0000255" key="3"/>
<evidence type="ECO:0000255" key="4">
    <source>
        <dbReference type="PROSITE-ProRule" id="PRU01262"/>
    </source>
</evidence>
<evidence type="ECO:0000305" key="5"/>
<feature type="signal peptide" evidence="3">
    <location>
        <begin position="1"/>
        <end position="18"/>
    </location>
</feature>
<feature type="chain" id="PRO_0000043267" description="Protein OS-9 homolog">
    <location>
        <begin position="19"/>
        <end position="258"/>
    </location>
</feature>
<feature type="domain" description="MRH" evidence="4">
    <location>
        <begin position="114"/>
        <end position="237"/>
    </location>
</feature>
<feature type="binding site" evidence="2">
    <location>
        <position position="127"/>
    </location>
    <ligand>
        <name>a mannooligosaccharide derivative</name>
        <dbReference type="ChEBI" id="CHEBI:71274"/>
    </ligand>
</feature>
<feature type="binding site" evidence="2">
    <location>
        <position position="139"/>
    </location>
    <ligand>
        <name>a mannooligosaccharide derivative</name>
        <dbReference type="ChEBI" id="CHEBI:71274"/>
    </ligand>
</feature>
<feature type="binding site" evidence="2">
    <location>
        <position position="194"/>
    </location>
    <ligand>
        <name>a mannooligosaccharide derivative</name>
        <dbReference type="ChEBI" id="CHEBI:71274"/>
    </ligand>
</feature>
<feature type="binding site" evidence="2">
    <location>
        <position position="200"/>
    </location>
    <ligand>
        <name>a mannooligosaccharide derivative</name>
        <dbReference type="ChEBI" id="CHEBI:71274"/>
    </ligand>
</feature>
<feature type="binding site" evidence="2">
    <location>
        <position position="219"/>
    </location>
    <ligand>
        <name>a mannooligosaccharide derivative</name>
        <dbReference type="ChEBI" id="CHEBI:71274"/>
    </ligand>
</feature>
<feature type="binding site" evidence="2">
    <location>
        <position position="225"/>
    </location>
    <ligand>
        <name>a mannooligosaccharide derivative</name>
        <dbReference type="ChEBI" id="CHEBI:71274"/>
    </ligand>
</feature>
<feature type="glycosylation site" description="N-linked (GlcNAc...) asparagine" evidence="3">
    <location>
        <position position="2"/>
    </location>
</feature>
<feature type="glycosylation site" description="N-linked (GlcNAc...) asparagine" evidence="3">
    <location>
        <position position="51"/>
    </location>
</feature>
<feature type="glycosylation site" description="N-linked (GlcNAc...) asparagine" evidence="3">
    <location>
        <position position="70"/>
    </location>
</feature>
<feature type="glycosylation site" description="N-linked (GlcNAc...) asparagine" evidence="3">
    <location>
        <position position="165"/>
    </location>
</feature>
<feature type="disulfide bond" evidence="4">
    <location>
        <begin position="116"/>
        <end position="132"/>
    </location>
</feature>
<feature type="disulfide bond" evidence="4">
    <location>
        <begin position="193"/>
        <end position="223"/>
    </location>
</feature>
<feature type="disulfide bond" evidence="4">
    <location>
        <begin position="208"/>
        <end position="235"/>
    </location>
</feature>
<proteinExistence type="inferred from homology"/>
<accession>Q5ACR4</accession>
<accession>A0A1D8PU50</accession>
<dbReference type="EMBL" id="CP017630">
    <property type="protein sequence ID" value="AOW31657.1"/>
    <property type="molecule type" value="Genomic_DNA"/>
</dbReference>
<dbReference type="RefSeq" id="XP_719340.1">
    <property type="nucleotide sequence ID" value="XM_714247.1"/>
</dbReference>
<dbReference type="STRING" id="237561.Q5ACR4"/>
<dbReference type="GlyCosmos" id="Q5ACR4">
    <property type="glycosylation" value="4 sites, No reported glycans"/>
</dbReference>
<dbReference type="EnsemblFungi" id="CR_10020C_A-T">
    <property type="protein sequence ID" value="CR_10020C_A-T-p1"/>
    <property type="gene ID" value="CR_10020C_A"/>
</dbReference>
<dbReference type="GeneID" id="3639032"/>
<dbReference type="KEGG" id="cal:CAALFM_CR10020CA"/>
<dbReference type="CGD" id="CAL0000197712">
    <property type="gene designation" value="orf19.7578"/>
</dbReference>
<dbReference type="VEuPathDB" id="FungiDB:CR_10020C_A"/>
<dbReference type="eggNOG" id="KOG3394">
    <property type="taxonomic scope" value="Eukaryota"/>
</dbReference>
<dbReference type="HOGENOM" id="CLU_1077675_0_0_1"/>
<dbReference type="InParanoid" id="Q5ACR4"/>
<dbReference type="OMA" id="HANYWTI"/>
<dbReference type="OrthoDB" id="448954at2759"/>
<dbReference type="Proteomes" id="UP000000559">
    <property type="component" value="Chromosome R"/>
</dbReference>
<dbReference type="GO" id="GO:0005788">
    <property type="term" value="C:endoplasmic reticulum lumen"/>
    <property type="evidence" value="ECO:0000318"/>
    <property type="project" value="GO_Central"/>
</dbReference>
<dbReference type="GO" id="GO:0005789">
    <property type="term" value="C:endoplasmic reticulum membrane"/>
    <property type="evidence" value="ECO:0007669"/>
    <property type="project" value="UniProtKB-SubCell"/>
</dbReference>
<dbReference type="GO" id="GO:0030246">
    <property type="term" value="F:carbohydrate binding"/>
    <property type="evidence" value="ECO:0007669"/>
    <property type="project" value="UniProtKB-KW"/>
</dbReference>
<dbReference type="GO" id="GO:0030968">
    <property type="term" value="P:endoplasmic reticulum unfolded protein response"/>
    <property type="evidence" value="ECO:0007669"/>
    <property type="project" value="InterPro"/>
</dbReference>
<dbReference type="GO" id="GO:0030970">
    <property type="term" value="P:retrograde protein transport, ER to cytosol"/>
    <property type="evidence" value="ECO:0000318"/>
    <property type="project" value="GO_Central"/>
</dbReference>
<dbReference type="Gene3D" id="2.70.130.10">
    <property type="entry name" value="Mannose-6-phosphate receptor binding domain"/>
    <property type="match status" value="1"/>
</dbReference>
<dbReference type="InterPro" id="IPR009011">
    <property type="entry name" value="Man6P_isomerase_rcpt-bd_dom_sf"/>
</dbReference>
<dbReference type="InterPro" id="IPR044865">
    <property type="entry name" value="MRH_dom"/>
</dbReference>
<dbReference type="InterPro" id="IPR045149">
    <property type="entry name" value="OS-9-like"/>
</dbReference>
<dbReference type="InterPro" id="IPR012913">
    <property type="entry name" value="OS9-like_dom"/>
</dbReference>
<dbReference type="PANTHER" id="PTHR15414:SF0">
    <property type="entry name" value="ENDOPLASMIC RETICULUM LECTIN 1"/>
    <property type="match status" value="1"/>
</dbReference>
<dbReference type="PANTHER" id="PTHR15414">
    <property type="entry name" value="OS-9-RELATED"/>
    <property type="match status" value="1"/>
</dbReference>
<dbReference type="Pfam" id="PF07915">
    <property type="entry name" value="PRKCSH"/>
    <property type="match status" value="1"/>
</dbReference>
<dbReference type="PROSITE" id="PS51914">
    <property type="entry name" value="MRH"/>
    <property type="match status" value="1"/>
</dbReference>
<keyword id="KW-1015">Disulfide bond</keyword>
<keyword id="KW-0256">Endoplasmic reticulum</keyword>
<keyword id="KW-0325">Glycoprotein</keyword>
<keyword id="KW-0430">Lectin</keyword>
<keyword id="KW-0472">Membrane</keyword>
<keyword id="KW-1185">Reference proteome</keyword>
<keyword id="KW-0732">Signal</keyword>
<organism>
    <name type="scientific">Candida albicans (strain SC5314 / ATCC MYA-2876)</name>
    <name type="common">Yeast</name>
    <dbReference type="NCBI Taxonomy" id="237561"/>
    <lineage>
        <taxon>Eukaryota</taxon>
        <taxon>Fungi</taxon>
        <taxon>Dikarya</taxon>
        <taxon>Ascomycota</taxon>
        <taxon>Saccharomycotina</taxon>
        <taxon>Pichiomycetes</taxon>
        <taxon>Debaryomycetaceae</taxon>
        <taxon>Candida/Lodderomyces clade</taxon>
        <taxon>Candida</taxon>
    </lineage>
</organism>
<sequence>MNWTSLVYLWFIFKSIFADLTSHQLKSKVVFLDTTISDEVARSYLGSEDGNVTHGNYEILSIANGANDGNITSYLCQLPRTKKMAPTKPKPTMSVHELKSRAIDLISESFVEGTSCVFSFNLHANYWTIGYCHGINVIQFHENLDDFISGIHKPHSPNHVYTLGNFSKQTSPLEFEFDTKERTISQRLLGEVCDLTGEPRTIDTIYRCDHILEIVELTEIRTCQYELHINVPKLCSLPEFKRTNLEEGVSEILCTRIE</sequence>
<reference key="1">
    <citation type="journal article" date="2004" name="Proc. Natl. Acad. Sci. U.S.A.">
        <title>The diploid genome sequence of Candida albicans.</title>
        <authorList>
            <person name="Jones T."/>
            <person name="Federspiel N.A."/>
            <person name="Chibana H."/>
            <person name="Dungan J."/>
            <person name="Kalman S."/>
            <person name="Magee B.B."/>
            <person name="Newport G."/>
            <person name="Thorstenson Y.R."/>
            <person name="Agabian N."/>
            <person name="Magee P.T."/>
            <person name="Davis R.W."/>
            <person name="Scherer S."/>
        </authorList>
    </citation>
    <scope>NUCLEOTIDE SEQUENCE [LARGE SCALE GENOMIC DNA]</scope>
    <source>
        <strain>SC5314 / ATCC MYA-2876</strain>
    </source>
</reference>
<reference key="2">
    <citation type="journal article" date="2007" name="Genome Biol.">
        <title>Assembly of the Candida albicans genome into sixteen supercontigs aligned on the eight chromosomes.</title>
        <authorList>
            <person name="van het Hoog M."/>
            <person name="Rast T.J."/>
            <person name="Martchenko M."/>
            <person name="Grindle S."/>
            <person name="Dignard D."/>
            <person name="Hogues H."/>
            <person name="Cuomo C."/>
            <person name="Berriman M."/>
            <person name="Scherer S."/>
            <person name="Magee B.B."/>
            <person name="Whiteway M."/>
            <person name="Chibana H."/>
            <person name="Nantel A."/>
            <person name="Magee P.T."/>
        </authorList>
    </citation>
    <scope>GENOME REANNOTATION</scope>
    <source>
        <strain>SC5314 / ATCC MYA-2876</strain>
    </source>
</reference>
<reference key="3">
    <citation type="journal article" date="2013" name="Genome Biol.">
        <title>Assembly of a phased diploid Candida albicans genome facilitates allele-specific measurements and provides a simple model for repeat and indel structure.</title>
        <authorList>
            <person name="Muzzey D."/>
            <person name="Schwartz K."/>
            <person name="Weissman J.S."/>
            <person name="Sherlock G."/>
        </authorList>
    </citation>
    <scope>NUCLEOTIDE SEQUENCE [LARGE SCALE GENOMIC DNA]</scope>
    <scope>GENOME REANNOTATION</scope>
    <source>
        <strain>SC5314 / ATCC MYA-2876</strain>
    </source>
</reference>